<dbReference type="EC" id="2.7.7.65"/>
<dbReference type="EMBL" id="AE005674">
    <property type="protein sequence ID" value="AAN43312.1"/>
    <property type="molecule type" value="Genomic_DNA"/>
</dbReference>
<dbReference type="EMBL" id="AE014073">
    <property type="status" value="NOT_ANNOTATED_CDS"/>
    <property type="molecule type" value="Genomic_DNA"/>
</dbReference>
<dbReference type="RefSeq" id="NP_707605.1">
    <property type="nucleotide sequence ID" value="NC_004337.2"/>
</dbReference>
<dbReference type="SMR" id="Q83KV7"/>
<dbReference type="STRING" id="198214.SF1737"/>
<dbReference type="PaxDb" id="198214-SF1737"/>
<dbReference type="GeneID" id="1024899"/>
<dbReference type="KEGG" id="sfl:SF1737"/>
<dbReference type="PATRIC" id="fig|198214.7.peg.2058"/>
<dbReference type="HOGENOM" id="CLU_000445_11_5_6"/>
<dbReference type="UniPathway" id="UPA00599"/>
<dbReference type="Proteomes" id="UP000001006">
    <property type="component" value="Chromosome"/>
</dbReference>
<dbReference type="Proteomes" id="UP000002673">
    <property type="component" value="Chromosome"/>
</dbReference>
<dbReference type="GO" id="GO:0005886">
    <property type="term" value="C:plasma membrane"/>
    <property type="evidence" value="ECO:0007669"/>
    <property type="project" value="TreeGrafter"/>
</dbReference>
<dbReference type="GO" id="GO:0052621">
    <property type="term" value="F:diguanylate cyclase activity"/>
    <property type="evidence" value="ECO:0007669"/>
    <property type="project" value="UniProtKB-EC"/>
</dbReference>
<dbReference type="GO" id="GO:0005525">
    <property type="term" value="F:GTP binding"/>
    <property type="evidence" value="ECO:0007669"/>
    <property type="project" value="UniProtKB-KW"/>
</dbReference>
<dbReference type="GO" id="GO:0020037">
    <property type="term" value="F:heme binding"/>
    <property type="evidence" value="ECO:0007669"/>
    <property type="project" value="InterPro"/>
</dbReference>
<dbReference type="GO" id="GO:0046872">
    <property type="term" value="F:metal ion binding"/>
    <property type="evidence" value="ECO:0007669"/>
    <property type="project" value="UniProtKB-KW"/>
</dbReference>
<dbReference type="GO" id="GO:0019825">
    <property type="term" value="F:oxygen binding"/>
    <property type="evidence" value="ECO:0007669"/>
    <property type="project" value="InterPro"/>
</dbReference>
<dbReference type="GO" id="GO:0043709">
    <property type="term" value="P:cell adhesion involved in single-species biofilm formation"/>
    <property type="evidence" value="ECO:0007669"/>
    <property type="project" value="TreeGrafter"/>
</dbReference>
<dbReference type="GO" id="GO:1902201">
    <property type="term" value="P:negative regulation of bacterial-type flagellum-dependent cell motility"/>
    <property type="evidence" value="ECO:0007669"/>
    <property type="project" value="TreeGrafter"/>
</dbReference>
<dbReference type="CDD" id="cd01949">
    <property type="entry name" value="GGDEF"/>
    <property type="match status" value="1"/>
</dbReference>
<dbReference type="CDD" id="cd14757">
    <property type="entry name" value="GS_EcDosC-like_GGDEF"/>
    <property type="match status" value="1"/>
</dbReference>
<dbReference type="FunFam" id="1.10.490.10:FF:000007">
    <property type="entry name" value="Diguanylate cyclase DosC"/>
    <property type="match status" value="1"/>
</dbReference>
<dbReference type="Gene3D" id="3.30.70.270">
    <property type="match status" value="1"/>
</dbReference>
<dbReference type="Gene3D" id="1.10.490.10">
    <property type="entry name" value="Globins"/>
    <property type="match status" value="1"/>
</dbReference>
<dbReference type="InterPro" id="IPR050469">
    <property type="entry name" value="Diguanylate_Cyclase"/>
</dbReference>
<dbReference type="InterPro" id="IPR048442">
    <property type="entry name" value="DosC_2nd"/>
</dbReference>
<dbReference type="InterPro" id="IPR039435">
    <property type="entry name" value="DosC_GS"/>
</dbReference>
<dbReference type="InterPro" id="IPR000160">
    <property type="entry name" value="GGDEF_dom"/>
</dbReference>
<dbReference type="InterPro" id="IPR009050">
    <property type="entry name" value="Globin-like_sf"/>
</dbReference>
<dbReference type="InterPro" id="IPR044398">
    <property type="entry name" value="Globin-sensor_dom"/>
</dbReference>
<dbReference type="InterPro" id="IPR012292">
    <property type="entry name" value="Globin/Proto"/>
</dbReference>
<dbReference type="InterPro" id="IPR029787">
    <property type="entry name" value="Nucleotide_cyclase"/>
</dbReference>
<dbReference type="InterPro" id="IPR043128">
    <property type="entry name" value="Rev_trsase/Diguanyl_cyclase"/>
</dbReference>
<dbReference type="NCBIfam" id="TIGR00254">
    <property type="entry name" value="GGDEF"/>
    <property type="match status" value="1"/>
</dbReference>
<dbReference type="PANTHER" id="PTHR45138:SF9">
    <property type="entry name" value="DIGUANYLATE CYCLASE DGCM-RELATED"/>
    <property type="match status" value="1"/>
</dbReference>
<dbReference type="PANTHER" id="PTHR45138">
    <property type="entry name" value="REGULATORY COMPONENTS OF SENSORY TRANSDUCTION SYSTEM"/>
    <property type="match status" value="1"/>
</dbReference>
<dbReference type="Pfam" id="PF21118">
    <property type="entry name" value="DosC_2nd"/>
    <property type="match status" value="1"/>
</dbReference>
<dbReference type="Pfam" id="PF00990">
    <property type="entry name" value="GGDEF"/>
    <property type="match status" value="1"/>
</dbReference>
<dbReference type="Pfam" id="PF11563">
    <property type="entry name" value="Protoglobin"/>
    <property type="match status" value="1"/>
</dbReference>
<dbReference type="SMART" id="SM00267">
    <property type="entry name" value="GGDEF"/>
    <property type="match status" value="1"/>
</dbReference>
<dbReference type="SUPFAM" id="SSF46458">
    <property type="entry name" value="Globin-like"/>
    <property type="match status" value="1"/>
</dbReference>
<dbReference type="SUPFAM" id="SSF55073">
    <property type="entry name" value="Nucleotide cyclase"/>
    <property type="match status" value="1"/>
</dbReference>
<dbReference type="PROSITE" id="PS50887">
    <property type="entry name" value="GGDEF"/>
    <property type="match status" value="1"/>
</dbReference>
<proteinExistence type="inferred from homology"/>
<accession>Q83KV7</accession>
<sequence>MEMYFKRMKDEWTGLVEQADPLIRAKAAEIALAHAHYLSIEFYRIVRIDPHAEEFLSNEQVERQLKSAMERWIINVLSAQVDDVERLIQIQHTVAEVHARIGIPVEIVEMGFRVLKKILYPVIFSSDYSAAEKLQVYHFSINSIDIAMEVMTRAFTFSDSSASKEDENYRIFSLLENAEEEKERQIASILSWEIDIIYKVLLDSDLGSSLPLSQADFGLWFNHKGRHYFSGIAEVGHISRLIQDFDGIFNQTMRNTRILNNRSLRVKFLLQIRNTVSQIITLLRELFEEVSRHEVGMDVLTKLLNRRFLPTIFKREIAHANRTGTPLSVLIIDVDKFKEINDTWGHNTGDEILRKVSFLSQKRLVKSKILGAGSSRKLAVS</sequence>
<organism>
    <name type="scientific">Shigella flexneri</name>
    <dbReference type="NCBI Taxonomy" id="623"/>
    <lineage>
        <taxon>Bacteria</taxon>
        <taxon>Pseudomonadati</taxon>
        <taxon>Pseudomonadota</taxon>
        <taxon>Gammaproteobacteria</taxon>
        <taxon>Enterobacterales</taxon>
        <taxon>Enterobacteriaceae</taxon>
        <taxon>Shigella</taxon>
    </lineage>
</organism>
<evidence type="ECO:0000250" key="1"/>
<evidence type="ECO:0000255" key="2"/>
<evidence type="ECO:0000255" key="3">
    <source>
        <dbReference type="PROSITE-ProRule" id="PRU00095"/>
    </source>
</evidence>
<name>DOSC_SHIFL</name>
<reference key="1">
    <citation type="journal article" date="2002" name="Nucleic Acids Res.">
        <title>Genome sequence of Shigella flexneri 2a: insights into pathogenicity through comparison with genomes of Escherichia coli K12 and O157.</title>
        <authorList>
            <person name="Jin Q."/>
            <person name="Yuan Z."/>
            <person name="Xu J."/>
            <person name="Wang Y."/>
            <person name="Shen Y."/>
            <person name="Lu W."/>
            <person name="Wang J."/>
            <person name="Liu H."/>
            <person name="Yang J."/>
            <person name="Yang F."/>
            <person name="Zhang X."/>
            <person name="Zhang J."/>
            <person name="Yang G."/>
            <person name="Wu H."/>
            <person name="Qu D."/>
            <person name="Dong J."/>
            <person name="Sun L."/>
            <person name="Xue Y."/>
            <person name="Zhao A."/>
            <person name="Gao Y."/>
            <person name="Zhu J."/>
            <person name="Kan B."/>
            <person name="Ding K."/>
            <person name="Chen S."/>
            <person name="Cheng H."/>
            <person name="Yao Z."/>
            <person name="He B."/>
            <person name="Chen R."/>
            <person name="Ma D."/>
            <person name="Qiang B."/>
            <person name="Wen Y."/>
            <person name="Hou Y."/>
            <person name="Yu J."/>
        </authorList>
    </citation>
    <scope>NUCLEOTIDE SEQUENCE [LARGE SCALE GENOMIC DNA]</scope>
    <source>
        <strain>301 / Serotype 2a</strain>
    </source>
</reference>
<reference key="2">
    <citation type="journal article" date="2003" name="Infect. Immun.">
        <title>Complete genome sequence and comparative genomics of Shigella flexneri serotype 2a strain 2457T.</title>
        <authorList>
            <person name="Wei J."/>
            <person name="Goldberg M.B."/>
            <person name="Burland V."/>
            <person name="Venkatesan M.M."/>
            <person name="Deng W."/>
            <person name="Fournier G."/>
            <person name="Mayhew G.F."/>
            <person name="Plunkett G. III"/>
            <person name="Rose D.J."/>
            <person name="Darling A."/>
            <person name="Mau B."/>
            <person name="Perna N.T."/>
            <person name="Payne S.M."/>
            <person name="Runyen-Janecky L.J."/>
            <person name="Zhou S."/>
            <person name="Schwartz D.C."/>
            <person name="Blattner F.R."/>
        </authorList>
    </citation>
    <scope>NUCLEOTIDE SEQUENCE [LARGE SCALE GENOMIC DNA]</scope>
    <source>
        <strain>ATCC 700930 / 2457T / Serotype 2a</strain>
    </source>
</reference>
<protein>
    <recommendedName>
        <fullName>Diguanylate cyclase DosC</fullName>
        <shortName>DGC</shortName>
        <ecNumber>2.7.7.65</ecNumber>
    </recommendedName>
    <alternativeName>
        <fullName>Direct oxygen-sensing cyclase</fullName>
    </alternativeName>
</protein>
<gene>
    <name type="primary">dosC</name>
    <name type="synonym">yddV</name>
    <name type="ordered locus">SF1736.1</name>
    <name type="ordered locus">S1869.1</name>
</gene>
<feature type="chain" id="PRO_0000316155" description="Diguanylate cyclase DosC">
    <location>
        <begin position="1"/>
        <end position="381"/>
    </location>
</feature>
<feature type="domain" description="GGDEF" evidence="3">
    <location>
        <begin position="325"/>
        <end position="381"/>
    </location>
</feature>
<feature type="binding site" description="proximal binding residue" evidence="1">
    <location>
        <position position="98"/>
    </location>
    <ligand>
        <name>heme</name>
        <dbReference type="ChEBI" id="CHEBI:30413"/>
    </ligand>
    <ligandPart>
        <name>Fe</name>
        <dbReference type="ChEBI" id="CHEBI:18248"/>
    </ligandPart>
</feature>
<feature type="binding site" evidence="1">
    <location>
        <position position="333"/>
    </location>
    <ligand>
        <name>Mg(2+)</name>
        <dbReference type="ChEBI" id="CHEBI:18420"/>
    </ligand>
</feature>
<feature type="binding site" evidence="1">
    <location>
        <position position="341"/>
    </location>
    <ligand>
        <name>substrate</name>
    </ligand>
</feature>
<feature type="binding site" evidence="1">
    <location>
        <position position="350"/>
    </location>
    <ligand>
        <name>substrate</name>
    </ligand>
</feature>
<feature type="site" description="Involved in oxygen binding and important for the stability of the Fe(II)-O(2) complex" evidence="1">
    <location>
        <position position="43"/>
    </location>
</feature>
<feature type="site" description="Important for oxygen binding and stability of the Fe(II)-O(2) complex" evidence="1">
    <location>
        <position position="60"/>
    </location>
</feature>
<feature type="site" description="Critical for restricting water access to the heme distal side to avoid rapid autoxidation" evidence="1">
    <location>
        <position position="65"/>
    </location>
</feature>
<feature type="site" description="Transition state stabilizer" evidence="2">
    <location>
        <position position="338"/>
    </location>
</feature>
<keyword id="KW-0342">GTP-binding</keyword>
<keyword id="KW-0349">Heme</keyword>
<keyword id="KW-0408">Iron</keyword>
<keyword id="KW-0460">Magnesium</keyword>
<keyword id="KW-0479">Metal-binding</keyword>
<keyword id="KW-0547">Nucleotide-binding</keyword>
<keyword id="KW-1185">Reference proteome</keyword>
<keyword id="KW-0808">Transferase</keyword>
<comment type="function">
    <text evidence="1">Globin-coupled heme-based oxygen sensor protein displaying diguanylate cyclase (DGC) activity in response to oxygen availability. Thus, catalyzes the synthesis of cyclic diguanylate (c-di-GMP) via the condensation of 2 GTP molecules. Cyclic-di-GMP is a second messenger which controls cell surface-associated traits in bacteria (By similarity).</text>
</comment>
<comment type="catalytic activity">
    <reaction>
        <text>2 GTP = 3',3'-c-di-GMP + 2 diphosphate</text>
        <dbReference type="Rhea" id="RHEA:24898"/>
        <dbReference type="ChEBI" id="CHEBI:33019"/>
        <dbReference type="ChEBI" id="CHEBI:37565"/>
        <dbReference type="ChEBI" id="CHEBI:58805"/>
        <dbReference type="EC" id="2.7.7.65"/>
    </reaction>
</comment>
<comment type="cofactor">
    <cofactor evidence="1">
        <name>heme</name>
        <dbReference type="ChEBI" id="CHEBI:30413"/>
    </cofactor>
    <text evidence="1">Binds 1 heme group per subunit.</text>
</comment>
<comment type="cofactor">
    <cofactor evidence="1">
        <name>Mg(2+)</name>
        <dbReference type="ChEBI" id="CHEBI:18420"/>
    </cofactor>
    <text evidence="1">Binds 1 Mg(2+) ion per subunit.</text>
</comment>
<comment type="pathway">
    <text>Purine metabolism; 3',5'-cyclic di-GMP biosynthesis.</text>
</comment>
<comment type="domain">
    <text evidence="1">Is composed of an N-terminal sensory globin-fold domain that binds heme and oxygen, and a C-terminal GGDEF diguanylate cyclase domain.</text>
</comment>